<keyword id="KW-0560">Oxidoreductase</keyword>
<accession>Q93SN7</accession>
<organism>
    <name type="scientific">Prochlorococcus marinus subsp. pastoris (strain CCMP1986 / NIES-2087 / MED4)</name>
    <dbReference type="NCBI Taxonomy" id="59919"/>
    <lineage>
        <taxon>Bacteria</taxon>
        <taxon>Bacillati</taxon>
        <taxon>Cyanobacteriota</taxon>
        <taxon>Cyanophyceae</taxon>
        <taxon>Synechococcales</taxon>
        <taxon>Prochlorococcaceae</taxon>
        <taxon>Prochlorococcus</taxon>
    </lineage>
</organism>
<proteinExistence type="inferred from homology"/>
<gene>
    <name type="primary">pebB</name>
    <name type="ordered locus">PMM1592</name>
</gene>
<feature type="chain" id="PRO_0000216735" description="Phycoerythrobilin:ferredoxin oxidoreductase">
    <location>
        <begin position="1"/>
        <end position="257"/>
    </location>
</feature>
<name>PEBB_PROMP</name>
<evidence type="ECO:0000305" key="1"/>
<sequence length="257" mass="29872">MLIQNTIFYSQEWRWAKFIKFLISQLDNYHCVEHKIASDFSYKESSYGSKKSKKNINLFTWGATHQKRINFARAVCINSPNYSVLNFLIIPKTSYNIPFLGVDFVSLPTSHLLVLDFQPSLKVENQFNSELLEQIIKLKKSCHSSLPVAEKMSEDVAKFFSPGLIWSRLAKHQDSDNLIENQLYDSFKEYLNLYLKTLFESEEVGHGLQQELINGQNDYLNYRRDNDPARPMLSSLFGKDFTESLINKVLFSTNKVL</sequence>
<comment type="function">
    <text>Catalyzes the two-electron reduction of the C2 and C3(1) diene system of 15,16-dihydrobiliverdin.</text>
</comment>
<comment type="catalytic activity">
    <reaction>
        <text>(3Z)-phycoerythrobilin + oxidized 2[4Fe-4S]-[ferredoxin] = 15,16-dihydrobiliverdin + reduced 2[4Fe-4S]-[ferredoxin] + 2 H(+)</text>
        <dbReference type="Rhea" id="RHEA:22092"/>
        <dbReference type="Rhea" id="RHEA-COMP:10002"/>
        <dbReference type="Rhea" id="RHEA-COMP:10004"/>
        <dbReference type="ChEBI" id="CHEBI:15378"/>
        <dbReference type="ChEBI" id="CHEBI:33722"/>
        <dbReference type="ChEBI" id="CHEBI:33723"/>
        <dbReference type="ChEBI" id="CHEBI:57438"/>
        <dbReference type="ChEBI" id="CHEBI:57899"/>
        <dbReference type="EC" id="1.3.7.3"/>
    </reaction>
</comment>
<comment type="similarity">
    <text evidence="1">Belongs to the HY2 family.</text>
</comment>
<dbReference type="EC" id="1.3.7.3"/>
<dbReference type="EMBL" id="AY030301">
    <property type="protein sequence ID" value="AAK38142.1"/>
    <property type="molecule type" value="Genomic_DNA"/>
</dbReference>
<dbReference type="EMBL" id="BX548174">
    <property type="protein sequence ID" value="CAE20051.1"/>
    <property type="molecule type" value="Genomic_DNA"/>
</dbReference>
<dbReference type="RefSeq" id="WP_011133220.1">
    <property type="nucleotide sequence ID" value="NC_005072.1"/>
</dbReference>
<dbReference type="SMR" id="Q93SN7"/>
<dbReference type="STRING" id="59919.PMM1592"/>
<dbReference type="KEGG" id="pmm:PMM1592"/>
<dbReference type="eggNOG" id="ENOG502Z8GK">
    <property type="taxonomic scope" value="Bacteria"/>
</dbReference>
<dbReference type="HOGENOM" id="CLU_086208_1_0_3"/>
<dbReference type="OrthoDB" id="421401at2"/>
<dbReference type="Proteomes" id="UP000001026">
    <property type="component" value="Chromosome"/>
</dbReference>
<dbReference type="GO" id="GO:0050897">
    <property type="term" value="F:cobalt ion binding"/>
    <property type="evidence" value="ECO:0007669"/>
    <property type="project" value="InterPro"/>
</dbReference>
<dbReference type="GO" id="GO:0050618">
    <property type="term" value="F:phycoerythrobilin:ferredoxin oxidoreductase activity"/>
    <property type="evidence" value="ECO:0007669"/>
    <property type="project" value="UniProtKB-UniRule"/>
</dbReference>
<dbReference type="GO" id="GO:0010024">
    <property type="term" value="P:phytochromobilin biosynthetic process"/>
    <property type="evidence" value="ECO:0007669"/>
    <property type="project" value="InterPro"/>
</dbReference>
<dbReference type="Gene3D" id="3.40.1500.20">
    <property type="match status" value="1"/>
</dbReference>
<dbReference type="HAMAP" id="MF_00793">
    <property type="entry name" value="PebB"/>
    <property type="match status" value="1"/>
</dbReference>
<dbReference type="InterPro" id="IPR009249">
    <property type="entry name" value="Ferredoxin-dep_bilin_Rdtase"/>
</dbReference>
<dbReference type="InterPro" id="IPR022827">
    <property type="entry name" value="Phycoerythrobilin_Fdx_Rdtase"/>
</dbReference>
<dbReference type="NCBIfam" id="NF009721">
    <property type="entry name" value="PRK13248.1"/>
    <property type="match status" value="1"/>
</dbReference>
<dbReference type="PANTHER" id="PTHR34557">
    <property type="entry name" value="PHYTOCHROMOBILIN:FERREDOXIN OXIDOREDUCTASE, CHLOROPLASTIC"/>
    <property type="match status" value="1"/>
</dbReference>
<dbReference type="PANTHER" id="PTHR34557:SF1">
    <property type="entry name" value="PHYTOCHROMOBILIN:FERREDOXIN OXIDOREDUCTASE, CHLOROPLASTIC"/>
    <property type="match status" value="1"/>
</dbReference>
<dbReference type="Pfam" id="PF05996">
    <property type="entry name" value="Fe_bilin_red"/>
    <property type="match status" value="1"/>
</dbReference>
<reference key="1">
    <citation type="journal article" date="2001" name="Plant Cell">
        <title>Functional genomic analysis of the HY2 family of ferredoxin-dependent bilin reductases from oxygenic photosynthetic organisms.</title>
        <authorList>
            <person name="Frankenberg N."/>
            <person name="Mukougawa K."/>
            <person name="Kohchi T."/>
            <person name="Lagarias J.C."/>
        </authorList>
    </citation>
    <scope>NUCLEOTIDE SEQUENCE [GENOMIC DNA]</scope>
</reference>
<reference key="2">
    <citation type="journal article" date="2003" name="Nature">
        <title>Genome divergence in two Prochlorococcus ecotypes reflects oceanic niche differentiation.</title>
        <authorList>
            <person name="Rocap G."/>
            <person name="Larimer F.W."/>
            <person name="Lamerdin J.E."/>
            <person name="Malfatti S."/>
            <person name="Chain P."/>
            <person name="Ahlgren N.A."/>
            <person name="Arellano A."/>
            <person name="Coleman M."/>
            <person name="Hauser L."/>
            <person name="Hess W.R."/>
            <person name="Johnson Z.I."/>
            <person name="Land M.L."/>
            <person name="Lindell D."/>
            <person name="Post A.F."/>
            <person name="Regala W."/>
            <person name="Shah M."/>
            <person name="Shaw S.L."/>
            <person name="Steglich C."/>
            <person name="Sullivan M.B."/>
            <person name="Ting C.S."/>
            <person name="Tolonen A."/>
            <person name="Webb E.A."/>
            <person name="Zinser E.R."/>
            <person name="Chisholm S.W."/>
        </authorList>
    </citation>
    <scope>NUCLEOTIDE SEQUENCE [LARGE SCALE GENOMIC DNA]</scope>
    <source>
        <strain>CCMP1986 / NIES-2087 / MED4</strain>
    </source>
</reference>
<protein>
    <recommendedName>
        <fullName>Phycoerythrobilin:ferredoxin oxidoreductase</fullName>
        <ecNumber>1.3.7.3</ecNumber>
    </recommendedName>
</protein>